<gene>
    <name evidence="1" type="primary">rplF</name>
    <name type="ordered locus">BF4166</name>
</gene>
<dbReference type="EMBL" id="AP006841">
    <property type="protein sequence ID" value="BAD50909.1"/>
    <property type="molecule type" value="Genomic_DNA"/>
</dbReference>
<dbReference type="RefSeq" id="WP_005791561.1">
    <property type="nucleotide sequence ID" value="NZ_UYXF01000007.1"/>
</dbReference>
<dbReference type="RefSeq" id="YP_101443.1">
    <property type="nucleotide sequence ID" value="NC_006347.1"/>
</dbReference>
<dbReference type="SMR" id="Q64NM3"/>
<dbReference type="STRING" id="295405.BF4166"/>
<dbReference type="GeneID" id="60368162"/>
<dbReference type="KEGG" id="bfr:BF4166"/>
<dbReference type="PATRIC" id="fig|295405.11.peg.4020"/>
<dbReference type="HOGENOM" id="CLU_065464_1_2_10"/>
<dbReference type="OrthoDB" id="9805007at2"/>
<dbReference type="Proteomes" id="UP000002197">
    <property type="component" value="Chromosome"/>
</dbReference>
<dbReference type="GO" id="GO:0022625">
    <property type="term" value="C:cytosolic large ribosomal subunit"/>
    <property type="evidence" value="ECO:0007669"/>
    <property type="project" value="TreeGrafter"/>
</dbReference>
<dbReference type="GO" id="GO:0019843">
    <property type="term" value="F:rRNA binding"/>
    <property type="evidence" value="ECO:0007669"/>
    <property type="project" value="UniProtKB-UniRule"/>
</dbReference>
<dbReference type="GO" id="GO:0003735">
    <property type="term" value="F:structural constituent of ribosome"/>
    <property type="evidence" value="ECO:0007669"/>
    <property type="project" value="InterPro"/>
</dbReference>
<dbReference type="GO" id="GO:0002181">
    <property type="term" value="P:cytoplasmic translation"/>
    <property type="evidence" value="ECO:0007669"/>
    <property type="project" value="TreeGrafter"/>
</dbReference>
<dbReference type="FunFam" id="3.90.930.12:FF:000002">
    <property type="entry name" value="50S ribosomal protein L6"/>
    <property type="match status" value="1"/>
</dbReference>
<dbReference type="FunFam" id="3.90.930.12:FF:000006">
    <property type="entry name" value="50S ribosomal protein L6"/>
    <property type="match status" value="1"/>
</dbReference>
<dbReference type="Gene3D" id="3.90.930.12">
    <property type="entry name" value="Ribosomal protein L6, alpha-beta domain"/>
    <property type="match status" value="2"/>
</dbReference>
<dbReference type="HAMAP" id="MF_01365_B">
    <property type="entry name" value="Ribosomal_uL6_B"/>
    <property type="match status" value="1"/>
</dbReference>
<dbReference type="InterPro" id="IPR000702">
    <property type="entry name" value="Ribosomal_uL6-like"/>
</dbReference>
<dbReference type="InterPro" id="IPR036789">
    <property type="entry name" value="Ribosomal_uL6-like_a/b-dom_sf"/>
</dbReference>
<dbReference type="InterPro" id="IPR020040">
    <property type="entry name" value="Ribosomal_uL6_a/b-dom"/>
</dbReference>
<dbReference type="InterPro" id="IPR019906">
    <property type="entry name" value="Ribosomal_uL6_bac-type"/>
</dbReference>
<dbReference type="InterPro" id="IPR002358">
    <property type="entry name" value="Ribosomal_uL6_CS"/>
</dbReference>
<dbReference type="NCBIfam" id="TIGR03654">
    <property type="entry name" value="L6_bact"/>
    <property type="match status" value="1"/>
</dbReference>
<dbReference type="PANTHER" id="PTHR11655">
    <property type="entry name" value="60S/50S RIBOSOMAL PROTEIN L6/L9"/>
    <property type="match status" value="1"/>
</dbReference>
<dbReference type="PANTHER" id="PTHR11655:SF14">
    <property type="entry name" value="LARGE RIBOSOMAL SUBUNIT PROTEIN UL6M"/>
    <property type="match status" value="1"/>
</dbReference>
<dbReference type="Pfam" id="PF00347">
    <property type="entry name" value="Ribosomal_L6"/>
    <property type="match status" value="2"/>
</dbReference>
<dbReference type="PIRSF" id="PIRSF002162">
    <property type="entry name" value="Ribosomal_L6"/>
    <property type="match status" value="1"/>
</dbReference>
<dbReference type="PRINTS" id="PR00059">
    <property type="entry name" value="RIBOSOMALL6"/>
</dbReference>
<dbReference type="SUPFAM" id="SSF56053">
    <property type="entry name" value="Ribosomal protein L6"/>
    <property type="match status" value="2"/>
</dbReference>
<dbReference type="PROSITE" id="PS00525">
    <property type="entry name" value="RIBOSOMAL_L6_1"/>
    <property type="match status" value="1"/>
</dbReference>
<name>RL6_BACFR</name>
<sequence>MSRIGKLPISIPAGVTVTLKDDVVTVKGPKGELSQYVNPAINVAIEDGHITLTENENAMLDNPKQKHAFHGLYRSLVHNMVVGVSEGYKKELELVGVGYRASNQGNIIELALGYTHNIFIQLPPEVKVETKSERNKNPLILLESCDKQLLGQVCSKIRSFRKPEPYKGKGIKFVGEEIRRKSGKSAGAK</sequence>
<feature type="chain" id="PRO_0000265213" description="Large ribosomal subunit protein uL6">
    <location>
        <begin position="1"/>
        <end position="189"/>
    </location>
</feature>
<accession>Q64NM3</accession>
<keyword id="KW-0687">Ribonucleoprotein</keyword>
<keyword id="KW-0689">Ribosomal protein</keyword>
<keyword id="KW-0694">RNA-binding</keyword>
<keyword id="KW-0699">rRNA-binding</keyword>
<proteinExistence type="inferred from homology"/>
<evidence type="ECO:0000255" key="1">
    <source>
        <dbReference type="HAMAP-Rule" id="MF_01365"/>
    </source>
</evidence>
<evidence type="ECO:0000305" key="2"/>
<organism>
    <name type="scientific">Bacteroides fragilis (strain YCH46)</name>
    <dbReference type="NCBI Taxonomy" id="295405"/>
    <lineage>
        <taxon>Bacteria</taxon>
        <taxon>Pseudomonadati</taxon>
        <taxon>Bacteroidota</taxon>
        <taxon>Bacteroidia</taxon>
        <taxon>Bacteroidales</taxon>
        <taxon>Bacteroidaceae</taxon>
        <taxon>Bacteroides</taxon>
    </lineage>
</organism>
<protein>
    <recommendedName>
        <fullName evidence="1">Large ribosomal subunit protein uL6</fullName>
    </recommendedName>
    <alternativeName>
        <fullName evidence="2">50S ribosomal protein L6</fullName>
    </alternativeName>
</protein>
<comment type="function">
    <text evidence="1">This protein binds to the 23S rRNA, and is important in its secondary structure. It is located near the subunit interface in the base of the L7/L12 stalk, and near the tRNA binding site of the peptidyltransferase center.</text>
</comment>
<comment type="subunit">
    <text evidence="1">Part of the 50S ribosomal subunit.</text>
</comment>
<comment type="similarity">
    <text evidence="1">Belongs to the universal ribosomal protein uL6 family.</text>
</comment>
<reference key="1">
    <citation type="journal article" date="2004" name="Proc. Natl. Acad. Sci. U.S.A.">
        <title>Genomic analysis of Bacteroides fragilis reveals extensive DNA inversions regulating cell surface adaptation.</title>
        <authorList>
            <person name="Kuwahara T."/>
            <person name="Yamashita A."/>
            <person name="Hirakawa H."/>
            <person name="Nakayama H."/>
            <person name="Toh H."/>
            <person name="Okada N."/>
            <person name="Kuhara S."/>
            <person name="Hattori M."/>
            <person name="Hayashi T."/>
            <person name="Ohnishi Y."/>
        </authorList>
    </citation>
    <scope>NUCLEOTIDE SEQUENCE [LARGE SCALE GENOMIC DNA]</scope>
    <source>
        <strain>YCH46</strain>
    </source>
</reference>